<protein>
    <recommendedName>
        <fullName evidence="1">Glucosamine-6-phosphate deaminase</fullName>
        <ecNumber evidence="1">3.5.99.6</ecNumber>
    </recommendedName>
    <alternativeName>
        <fullName evidence="1">GlcN6P deaminase</fullName>
        <shortName evidence="1">GNPDA</shortName>
    </alternativeName>
    <alternativeName>
        <fullName evidence="1">Glucosamine-6-phosphate isomerase</fullName>
    </alternativeName>
</protein>
<dbReference type="EC" id="3.5.99.6" evidence="1"/>
<dbReference type="EMBL" id="CP001615">
    <property type="protein sequence ID" value="ACQ71177.1"/>
    <property type="molecule type" value="Genomic_DNA"/>
</dbReference>
<dbReference type="RefSeq" id="WP_015880736.1">
    <property type="nucleotide sequence ID" value="NC_012673.1"/>
</dbReference>
<dbReference type="SMR" id="C4L2C5"/>
<dbReference type="STRING" id="360911.EAT1b_2255"/>
<dbReference type="KEGG" id="eat:EAT1b_2255"/>
<dbReference type="eggNOG" id="COG0363">
    <property type="taxonomic scope" value="Bacteria"/>
</dbReference>
<dbReference type="HOGENOM" id="CLU_049611_1_1_9"/>
<dbReference type="OrthoDB" id="9791139at2"/>
<dbReference type="UniPathway" id="UPA00629">
    <property type="reaction ID" value="UER00684"/>
</dbReference>
<dbReference type="Proteomes" id="UP000000716">
    <property type="component" value="Chromosome"/>
</dbReference>
<dbReference type="GO" id="GO:0005737">
    <property type="term" value="C:cytoplasm"/>
    <property type="evidence" value="ECO:0007669"/>
    <property type="project" value="TreeGrafter"/>
</dbReference>
<dbReference type="GO" id="GO:0004342">
    <property type="term" value="F:glucosamine-6-phosphate deaminase activity"/>
    <property type="evidence" value="ECO:0007669"/>
    <property type="project" value="UniProtKB-UniRule"/>
</dbReference>
<dbReference type="GO" id="GO:0042802">
    <property type="term" value="F:identical protein binding"/>
    <property type="evidence" value="ECO:0007669"/>
    <property type="project" value="TreeGrafter"/>
</dbReference>
<dbReference type="GO" id="GO:0005975">
    <property type="term" value="P:carbohydrate metabolic process"/>
    <property type="evidence" value="ECO:0007669"/>
    <property type="project" value="InterPro"/>
</dbReference>
<dbReference type="GO" id="GO:0006043">
    <property type="term" value="P:glucosamine catabolic process"/>
    <property type="evidence" value="ECO:0007669"/>
    <property type="project" value="TreeGrafter"/>
</dbReference>
<dbReference type="GO" id="GO:0006046">
    <property type="term" value="P:N-acetylglucosamine catabolic process"/>
    <property type="evidence" value="ECO:0007669"/>
    <property type="project" value="TreeGrafter"/>
</dbReference>
<dbReference type="GO" id="GO:0019262">
    <property type="term" value="P:N-acetylneuraminate catabolic process"/>
    <property type="evidence" value="ECO:0007669"/>
    <property type="project" value="UniProtKB-UniRule"/>
</dbReference>
<dbReference type="CDD" id="cd01399">
    <property type="entry name" value="GlcN6P_deaminase"/>
    <property type="match status" value="1"/>
</dbReference>
<dbReference type="FunFam" id="3.40.50.1360:FF:000003">
    <property type="entry name" value="Glucosamine-6-phosphate deaminase"/>
    <property type="match status" value="1"/>
</dbReference>
<dbReference type="Gene3D" id="3.40.50.1360">
    <property type="match status" value="1"/>
</dbReference>
<dbReference type="HAMAP" id="MF_01241">
    <property type="entry name" value="GlcN6P_deamin"/>
    <property type="match status" value="1"/>
</dbReference>
<dbReference type="InterPro" id="IPR006148">
    <property type="entry name" value="Glc/Gal-6P_isomerase"/>
</dbReference>
<dbReference type="InterPro" id="IPR004547">
    <property type="entry name" value="Glucosamine6P_isomerase"/>
</dbReference>
<dbReference type="InterPro" id="IPR018321">
    <property type="entry name" value="Glucosamine6P_isomerase_CS"/>
</dbReference>
<dbReference type="InterPro" id="IPR037171">
    <property type="entry name" value="NagB/RpiA_transferase-like"/>
</dbReference>
<dbReference type="NCBIfam" id="TIGR00502">
    <property type="entry name" value="nagB"/>
    <property type="match status" value="1"/>
</dbReference>
<dbReference type="PANTHER" id="PTHR11280">
    <property type="entry name" value="GLUCOSAMINE-6-PHOSPHATE ISOMERASE"/>
    <property type="match status" value="1"/>
</dbReference>
<dbReference type="PANTHER" id="PTHR11280:SF5">
    <property type="entry name" value="GLUCOSAMINE-6-PHOSPHATE ISOMERASE"/>
    <property type="match status" value="1"/>
</dbReference>
<dbReference type="Pfam" id="PF01182">
    <property type="entry name" value="Glucosamine_iso"/>
    <property type="match status" value="1"/>
</dbReference>
<dbReference type="SUPFAM" id="SSF100950">
    <property type="entry name" value="NagB/RpiA/CoA transferase-like"/>
    <property type="match status" value="1"/>
</dbReference>
<dbReference type="PROSITE" id="PS01161">
    <property type="entry name" value="GLC_GALNAC_ISOMERASE"/>
    <property type="match status" value="1"/>
</dbReference>
<feature type="chain" id="PRO_1000214084" description="Glucosamine-6-phosphate deaminase">
    <location>
        <begin position="1"/>
        <end position="254"/>
    </location>
</feature>
<feature type="active site" description="Proton acceptor; for enolization step" evidence="1">
    <location>
        <position position="63"/>
    </location>
</feature>
<feature type="active site" description="For ring-opening step" evidence="1">
    <location>
        <position position="129"/>
    </location>
</feature>
<feature type="active site" description="Proton acceptor; for ring-opening step" evidence="1">
    <location>
        <position position="131"/>
    </location>
</feature>
<feature type="active site" description="For ring-opening step" evidence="1">
    <location>
        <position position="136"/>
    </location>
</feature>
<evidence type="ECO:0000255" key="1">
    <source>
        <dbReference type="HAMAP-Rule" id="MF_01241"/>
    </source>
</evidence>
<proteinExistence type="inferred from homology"/>
<gene>
    <name evidence="1" type="primary">nagB</name>
    <name type="ordered locus">EAT1b_2255</name>
</gene>
<name>NAGB_EXISA</name>
<keyword id="KW-0119">Carbohydrate metabolism</keyword>
<keyword id="KW-0378">Hydrolase</keyword>
<reference key="1">
    <citation type="journal article" date="2011" name="J. Bacteriol.">
        <title>Complete genome sequence of the Thermophilic Bacterium Exiguobacterium sp. AT1b.</title>
        <authorList>
            <person name="Vishnivetskaya T.A."/>
            <person name="Lucas S."/>
            <person name="Copeland A."/>
            <person name="Lapidus A."/>
            <person name="Glavina del Rio T."/>
            <person name="Dalin E."/>
            <person name="Tice H."/>
            <person name="Bruce D.C."/>
            <person name="Goodwin L.A."/>
            <person name="Pitluck S."/>
            <person name="Saunders E."/>
            <person name="Brettin T."/>
            <person name="Detter C."/>
            <person name="Han C."/>
            <person name="Larimer F."/>
            <person name="Land M.L."/>
            <person name="Hauser L.J."/>
            <person name="Kyrpides N.C."/>
            <person name="Ovchinnikova G."/>
            <person name="Kathariou S."/>
            <person name="Ramaley R.F."/>
            <person name="Rodrigues D.F."/>
            <person name="Hendrix C."/>
            <person name="Richardson P."/>
            <person name="Tiedje J.M."/>
        </authorList>
    </citation>
    <scope>NUCLEOTIDE SEQUENCE [LARGE SCALE GENOMIC DNA]</scope>
    <source>
        <strain>ATCC BAA-1283 / AT1b</strain>
    </source>
</reference>
<sequence length="254" mass="28029">MNVLVAKTANDAERIAYTLIKERISGKHDFVLGLATGSTPVGMYQMFKQDALDCSHVTSVNLDEYIGLSPEHPQSYNRFMKDRLFDEVPFKQSHLPQGDAPDPQAEAARYEDLVRKLGVDLQLLGIGENGHIAFNEPGTALDAKTHVTELTESTREANRRFFDRLEDVPTHAITMGLDTIMNAREIVLVATGERKAEAVQHMIESVPTVDWPATILQAHPGVTVVLDGAAASRCAESLQARGQEAATRFFTIRD</sequence>
<comment type="function">
    <text evidence="1">Catalyzes the reversible isomerization-deamination of glucosamine 6-phosphate (GlcN6P) to form fructose 6-phosphate (Fru6P) and ammonium ion.</text>
</comment>
<comment type="catalytic activity">
    <reaction evidence="1">
        <text>alpha-D-glucosamine 6-phosphate + H2O = beta-D-fructose 6-phosphate + NH4(+)</text>
        <dbReference type="Rhea" id="RHEA:12172"/>
        <dbReference type="ChEBI" id="CHEBI:15377"/>
        <dbReference type="ChEBI" id="CHEBI:28938"/>
        <dbReference type="ChEBI" id="CHEBI:57634"/>
        <dbReference type="ChEBI" id="CHEBI:75989"/>
        <dbReference type="EC" id="3.5.99.6"/>
    </reaction>
</comment>
<comment type="pathway">
    <text evidence="1">Amino-sugar metabolism; N-acetylneuraminate degradation; D-fructose 6-phosphate from N-acetylneuraminate: step 5/5.</text>
</comment>
<comment type="similarity">
    <text evidence="1">Belongs to the glucosamine/galactosamine-6-phosphate isomerase family. NagB subfamily.</text>
</comment>
<accession>C4L2C5</accession>
<organism>
    <name type="scientific">Exiguobacterium sp. (strain ATCC BAA-1283 / AT1b)</name>
    <dbReference type="NCBI Taxonomy" id="360911"/>
    <lineage>
        <taxon>Bacteria</taxon>
        <taxon>Bacillati</taxon>
        <taxon>Bacillota</taxon>
        <taxon>Bacilli</taxon>
        <taxon>Bacillales</taxon>
        <taxon>Bacillales Family XII. Incertae Sedis</taxon>
        <taxon>Exiguobacterium</taxon>
    </lineage>
</organism>